<accession>B0YD89</accession>
<name>PRPC_ASPFC</name>
<evidence type="ECO:0000250" key="1">
    <source>
        <dbReference type="UniProtKB" id="O34002"/>
    </source>
</evidence>
<evidence type="ECO:0000250" key="2">
    <source>
        <dbReference type="UniProtKB" id="P31660"/>
    </source>
</evidence>
<evidence type="ECO:0000255" key="3"/>
<evidence type="ECO:0000269" key="4">
    <source>
    </source>
</evidence>
<evidence type="ECO:0000269" key="5">
    <source>
    </source>
</evidence>
<evidence type="ECO:0000269" key="6">
    <source>
    </source>
</evidence>
<evidence type="ECO:0000303" key="7">
    <source>
    </source>
</evidence>
<evidence type="ECO:0000305" key="8"/>
<evidence type="ECO:0007744" key="9">
    <source>
        <dbReference type="PDB" id="5UQO"/>
    </source>
</evidence>
<evidence type="ECO:0007744" key="10">
    <source>
        <dbReference type="PDB" id="5UQQ"/>
    </source>
</evidence>
<evidence type="ECO:0007744" key="11">
    <source>
        <dbReference type="PDB" id="5UQR"/>
    </source>
</evidence>
<evidence type="ECO:0007744" key="12">
    <source>
        <dbReference type="PDB" id="5UQU"/>
    </source>
</evidence>
<evidence type="ECO:0007744" key="13">
    <source>
        <dbReference type="PDB" id="6BOL"/>
    </source>
</evidence>
<evidence type="ECO:0007744" key="14">
    <source>
        <dbReference type="PDB" id="6BOM"/>
    </source>
</evidence>
<evidence type="ECO:0007744" key="15">
    <source>
        <dbReference type="PDB" id="6BON"/>
    </source>
</evidence>
<evidence type="ECO:0007744" key="16">
    <source>
        <dbReference type="PDB" id="6BOO"/>
    </source>
</evidence>
<evidence type="ECO:0007744" key="17">
    <source>
        <dbReference type="PDB" id="6BOP"/>
    </source>
</evidence>
<evidence type="ECO:0007829" key="18">
    <source>
        <dbReference type="PDB" id="5UQU"/>
    </source>
</evidence>
<evidence type="ECO:0007829" key="19">
    <source>
        <dbReference type="PDB" id="6BOM"/>
    </source>
</evidence>
<protein>
    <recommendedName>
        <fullName evidence="8">2-methylcitrate synthase, mitochondrial</fullName>
        <shortName evidence="7">Methylcitrate synthase</shortName>
        <ecNumber evidence="4">2.3.3.5</ecNumber>
    </recommendedName>
    <alternativeName>
        <fullName evidence="2">(2S,3S)-2-methylcitrate synthase</fullName>
    </alternativeName>
    <alternativeName>
        <fullName evidence="8">Citrate synthase 2</fullName>
        <ecNumber evidence="4 6">2.3.3.16</ecNumber>
    </alternativeName>
</protein>
<proteinExistence type="evidence at protein level"/>
<dbReference type="EC" id="2.3.3.5" evidence="4"/>
<dbReference type="EC" id="2.3.3.16" evidence="4 6"/>
<dbReference type="EMBL" id="DS499602">
    <property type="protein sequence ID" value="EDP47623.1"/>
    <property type="molecule type" value="Genomic_DNA"/>
</dbReference>
<dbReference type="PDB" id="5UQO">
    <property type="method" value="X-ray"/>
    <property type="resolution" value="2.50 A"/>
    <property type="chains" value="A/B=29-465"/>
</dbReference>
<dbReference type="PDB" id="5UQQ">
    <property type="method" value="X-ray"/>
    <property type="resolution" value="2.30 A"/>
    <property type="chains" value="A/B/C/D/E/F=29-465"/>
</dbReference>
<dbReference type="PDB" id="5UQR">
    <property type="method" value="X-ray"/>
    <property type="resolution" value="1.75 A"/>
    <property type="chains" value="A/B=29-465"/>
</dbReference>
<dbReference type="PDB" id="5UQU">
    <property type="method" value="X-ray"/>
    <property type="resolution" value="1.70 A"/>
    <property type="chains" value="A/B=29-465"/>
</dbReference>
<dbReference type="PDB" id="6BOL">
    <property type="method" value="X-ray"/>
    <property type="resolution" value="2.20 A"/>
    <property type="chains" value="A/B=29-465"/>
</dbReference>
<dbReference type="PDB" id="6BOM">
    <property type="method" value="X-ray"/>
    <property type="resolution" value="2.05 A"/>
    <property type="chains" value="A/B/C/D/E/F=29-465"/>
</dbReference>
<dbReference type="PDB" id="6BON">
    <property type="method" value="X-ray"/>
    <property type="resolution" value="2.35 A"/>
    <property type="chains" value="A/B=29-465"/>
</dbReference>
<dbReference type="PDB" id="6BOO">
    <property type="method" value="X-ray"/>
    <property type="resolution" value="2.60 A"/>
    <property type="chains" value="A/B/C/D=29-465"/>
</dbReference>
<dbReference type="PDB" id="6BOP">
    <property type="method" value="X-ray"/>
    <property type="resolution" value="2.71 A"/>
    <property type="chains" value="A/B/C/D=29-465"/>
</dbReference>
<dbReference type="PDBsum" id="5UQO"/>
<dbReference type="PDBsum" id="5UQQ"/>
<dbReference type="PDBsum" id="5UQR"/>
<dbReference type="PDBsum" id="5UQU"/>
<dbReference type="PDBsum" id="6BOL"/>
<dbReference type="PDBsum" id="6BOM"/>
<dbReference type="PDBsum" id="6BON"/>
<dbReference type="PDBsum" id="6BOO"/>
<dbReference type="PDBsum" id="6BOP"/>
<dbReference type="SMR" id="B0YD89"/>
<dbReference type="EnsemblFungi" id="EDP47623">
    <property type="protein sequence ID" value="EDP47623"/>
    <property type="gene ID" value="AFUB_094700"/>
</dbReference>
<dbReference type="VEuPathDB" id="FungiDB:AFUB_094700"/>
<dbReference type="HOGENOM" id="CLU_022049_2_1_1"/>
<dbReference type="OrthoDB" id="33279at5052"/>
<dbReference type="PhylomeDB" id="B0YD89"/>
<dbReference type="UniPathway" id="UPA00946"/>
<dbReference type="Proteomes" id="UP000001699">
    <property type="component" value="Unassembled WGS sequence"/>
</dbReference>
<dbReference type="GO" id="GO:0005759">
    <property type="term" value="C:mitochondrial matrix"/>
    <property type="evidence" value="ECO:0007669"/>
    <property type="project" value="UniProtKB-SubCell"/>
</dbReference>
<dbReference type="GO" id="GO:0050440">
    <property type="term" value="F:2-methylcitrate synthase activity"/>
    <property type="evidence" value="ECO:0007669"/>
    <property type="project" value="UniProtKB-EC"/>
</dbReference>
<dbReference type="GO" id="GO:0004108">
    <property type="term" value="F:citrate (Si)-synthase activity"/>
    <property type="evidence" value="ECO:0007669"/>
    <property type="project" value="EnsemblFungi"/>
</dbReference>
<dbReference type="GO" id="GO:0036440">
    <property type="term" value="F:citrate synthase activity"/>
    <property type="evidence" value="ECO:0000314"/>
    <property type="project" value="UniProtKB"/>
</dbReference>
<dbReference type="GO" id="GO:0042802">
    <property type="term" value="F:identical protein binding"/>
    <property type="evidence" value="ECO:0000353"/>
    <property type="project" value="UniProtKB"/>
</dbReference>
<dbReference type="GO" id="GO:0005975">
    <property type="term" value="P:carbohydrate metabolic process"/>
    <property type="evidence" value="ECO:0007669"/>
    <property type="project" value="TreeGrafter"/>
</dbReference>
<dbReference type="GO" id="GO:0019629">
    <property type="term" value="P:propionate catabolic process, 2-methylcitrate cycle"/>
    <property type="evidence" value="ECO:0007669"/>
    <property type="project" value="EnsemblFungi"/>
</dbReference>
<dbReference type="GO" id="GO:0006099">
    <property type="term" value="P:tricarboxylic acid cycle"/>
    <property type="evidence" value="ECO:0007669"/>
    <property type="project" value="EnsemblFungi"/>
</dbReference>
<dbReference type="FunFam" id="1.10.230.10:FF:000001">
    <property type="entry name" value="Citrate synthase"/>
    <property type="match status" value="1"/>
</dbReference>
<dbReference type="FunFam" id="1.10.580.10:FF:000001">
    <property type="entry name" value="Citrate synthase"/>
    <property type="match status" value="1"/>
</dbReference>
<dbReference type="Gene3D" id="1.10.580.10">
    <property type="entry name" value="Citrate Synthase, domain 1"/>
    <property type="match status" value="1"/>
</dbReference>
<dbReference type="Gene3D" id="1.10.230.10">
    <property type="entry name" value="Cytochrome P450-Terp, domain 2"/>
    <property type="match status" value="1"/>
</dbReference>
<dbReference type="InterPro" id="IPR016142">
    <property type="entry name" value="Citrate_synth-like_lrg_a-sub"/>
</dbReference>
<dbReference type="InterPro" id="IPR016143">
    <property type="entry name" value="Citrate_synth-like_sm_a-sub"/>
</dbReference>
<dbReference type="InterPro" id="IPR002020">
    <property type="entry name" value="Citrate_synthase"/>
</dbReference>
<dbReference type="InterPro" id="IPR019810">
    <property type="entry name" value="Citrate_synthase_AS"/>
</dbReference>
<dbReference type="InterPro" id="IPR036969">
    <property type="entry name" value="Citrate_synthase_sf"/>
</dbReference>
<dbReference type="NCBIfam" id="NF007128">
    <property type="entry name" value="PRK09569.1"/>
    <property type="match status" value="1"/>
</dbReference>
<dbReference type="PANTHER" id="PTHR11739">
    <property type="entry name" value="CITRATE SYNTHASE"/>
    <property type="match status" value="1"/>
</dbReference>
<dbReference type="PANTHER" id="PTHR11739:SF15">
    <property type="entry name" value="CITRATE SYNTHASE 3, MITOCHONDRIAL"/>
    <property type="match status" value="1"/>
</dbReference>
<dbReference type="Pfam" id="PF00285">
    <property type="entry name" value="Citrate_synt"/>
    <property type="match status" value="1"/>
</dbReference>
<dbReference type="PRINTS" id="PR00143">
    <property type="entry name" value="CITRTSNTHASE"/>
</dbReference>
<dbReference type="SUPFAM" id="SSF48256">
    <property type="entry name" value="Citrate synthase"/>
    <property type="match status" value="1"/>
</dbReference>
<dbReference type="PROSITE" id="PS00480">
    <property type="entry name" value="CITRATE_SYNTHASE"/>
    <property type="match status" value="1"/>
</dbReference>
<keyword id="KW-0002">3D-structure</keyword>
<keyword id="KW-0496">Mitochondrion</keyword>
<keyword id="KW-0808">Transferase</keyword>
<keyword id="KW-0809">Transit peptide</keyword>
<keyword id="KW-0843">Virulence</keyword>
<feature type="transit peptide" description="Mitochondrion" evidence="3">
    <location>
        <begin position="1"/>
        <end position="29"/>
    </location>
</feature>
<feature type="chain" id="PRO_0000432972" description="2-methylcitrate synthase, mitochondrial" evidence="3">
    <location>
        <begin position="30"/>
        <end position="465"/>
    </location>
</feature>
<feature type="active site" evidence="1">
    <location>
        <position position="305"/>
    </location>
</feature>
<feature type="active site" evidence="1">
    <location>
        <position position="351"/>
    </location>
</feature>
<feature type="active site" evidence="1">
    <location>
        <position position="408"/>
    </location>
</feature>
<feature type="binding site" description="in chain B" evidence="6 12 15 16">
    <location>
        <position position="74"/>
    </location>
    <ligand>
        <name>CoA</name>
        <dbReference type="ChEBI" id="CHEBI:57287"/>
        <note>ligand shared between homodimeric partners</note>
    </ligand>
</feature>
<feature type="binding site" description="in chain A" evidence="6 12 15 16">
    <location>
        <position position="192"/>
    </location>
    <ligand>
        <name>CoA</name>
        <dbReference type="ChEBI" id="CHEBI:57287"/>
        <note>ligand shared between homodimeric partners</note>
    </ligand>
</feature>
<feature type="binding site" description="in chain A" evidence="6 11 12 15 16">
    <location>
        <position position="269"/>
    </location>
    <ligand>
        <name>oxaloacetate</name>
        <dbReference type="ChEBI" id="CHEBI:16452"/>
        <note>ligand shared between homodimeric partners</note>
    </ligand>
</feature>
<feature type="binding site" description="in chain B" evidence="6 12 15">
    <location>
        <position position="304"/>
    </location>
    <ligand>
        <name>CoA</name>
        <dbReference type="ChEBI" id="CHEBI:57287"/>
        <note>ligand shared between homodimeric partners</note>
    </ligand>
</feature>
<feature type="binding site" description="in chain B" evidence="6 12 15 16">
    <location>
        <position position="346"/>
    </location>
    <ligand>
        <name>CoA</name>
        <dbReference type="ChEBI" id="CHEBI:57287"/>
        <note>ligand shared between homodimeric partners</note>
    </ligand>
</feature>
<feature type="binding site" description="in chain B" evidence="6 12 15 16">
    <location>
        <position position="348"/>
    </location>
    <ligand>
        <name>CoA</name>
        <dbReference type="ChEBI" id="CHEBI:57287"/>
        <note>ligand shared between homodimeric partners</note>
    </ligand>
</feature>
<feature type="binding site" description="in chain B" evidence="6 12 15 16">
    <location>
        <position position="349"/>
    </location>
    <ligand>
        <name>CoA</name>
        <dbReference type="ChEBI" id="CHEBI:57287"/>
        <note>ligand shared between homodimeric partners</note>
    </ligand>
</feature>
<feature type="binding site" description="in chain A" evidence="6 11 12 16">
    <location>
        <position position="351"/>
    </location>
    <ligand>
        <name>oxaloacetate</name>
        <dbReference type="ChEBI" id="CHEBI:16452"/>
        <note>ligand shared between homodimeric partners</note>
    </ligand>
</feature>
<feature type="binding site" description="in chain A" evidence="6 11 12 15 16">
    <location>
        <position position="360"/>
    </location>
    <ligand>
        <name>oxaloacetate</name>
        <dbReference type="ChEBI" id="CHEBI:16452"/>
        <note>ligand shared between homodimeric partners</note>
    </ligand>
</feature>
<feature type="binding site" description="in chain B" evidence="6 12 15 16">
    <location>
        <position position="400"/>
    </location>
    <ligand>
        <name>CoA</name>
        <dbReference type="ChEBI" id="CHEBI:57287"/>
        <note>ligand shared between homodimeric partners</note>
    </ligand>
</feature>
<feature type="binding site" description="in chain B" evidence="6 12 15 16">
    <location>
        <position position="401"/>
    </location>
    <ligand>
        <name>CoA</name>
        <dbReference type="ChEBI" id="CHEBI:57287"/>
        <note>ligand shared between homodimeric partners</note>
    </ligand>
</feature>
<feature type="binding site" description="in chain B" evidence="6 12 15">
    <location>
        <position position="406"/>
    </location>
    <ligand>
        <name>CoA</name>
        <dbReference type="ChEBI" id="CHEBI:57287"/>
        <note>ligand shared between homodimeric partners</note>
    </ligand>
</feature>
<feature type="binding site" description="in chain A" evidence="6 11 12 15 16">
    <location>
        <position position="434"/>
    </location>
    <ligand>
        <name>oxaloacetate</name>
        <dbReference type="ChEBI" id="CHEBI:16452"/>
        <note>ligand shared between homodimeric partners</note>
    </ligand>
</feature>
<feature type="binding site" description="in chain B" evidence="6 11 12 15 16">
    <location>
        <position position="454"/>
    </location>
    <ligand>
        <name>oxaloacetate</name>
        <dbReference type="ChEBI" id="CHEBI:16452"/>
        <note>ligand shared between homodimeric partners</note>
    </ligand>
</feature>
<feature type="mutagenesis site" description="No activity." evidence="6">
    <original>W</original>
    <variation>Y</variation>
    <location>
        <position position="81"/>
    </location>
</feature>
<feature type="mutagenesis site" description="Increased affinity for oxaloacetate, acetyl-coA and propionyl-CoA." evidence="6">
    <original>G</original>
    <variation>A</variation>
    <location>
        <position position="352"/>
    </location>
</feature>
<feature type="mutagenesis site" description="No activity." evidence="6">
    <original>G</original>
    <variation>A</variation>
    <location>
        <position position="419"/>
    </location>
</feature>
<feature type="helix" evidence="18">
    <location>
        <begin position="35"/>
        <end position="54"/>
    </location>
</feature>
<feature type="turn" evidence="18">
    <location>
        <begin position="55"/>
        <end position="58"/>
    </location>
</feature>
<feature type="strand" evidence="18">
    <location>
        <begin position="60"/>
        <end position="65"/>
    </location>
</feature>
<feature type="helix" evidence="18">
    <location>
        <begin position="66"/>
        <end position="70"/>
    </location>
</feature>
<feature type="turn" evidence="18">
    <location>
        <begin position="71"/>
        <end position="75"/>
    </location>
</feature>
<feature type="strand" evidence="18">
    <location>
        <begin position="77"/>
        <end position="80"/>
    </location>
</feature>
<feature type="strand" evidence="18">
    <location>
        <begin position="83"/>
        <end position="87"/>
    </location>
</feature>
<feature type="turn" evidence="18">
    <location>
        <begin position="88"/>
        <end position="90"/>
    </location>
</feature>
<feature type="strand" evidence="18">
    <location>
        <begin position="91"/>
        <end position="94"/>
    </location>
</feature>
<feature type="helix" evidence="18">
    <location>
        <begin position="99"/>
        <end position="105"/>
    </location>
</feature>
<feature type="strand" evidence="18">
    <location>
        <begin position="110"/>
        <end position="115"/>
    </location>
</feature>
<feature type="helix" evidence="18">
    <location>
        <begin position="117"/>
        <end position="126"/>
    </location>
</feature>
<feature type="helix" evidence="18">
    <location>
        <begin position="132"/>
        <end position="144"/>
    </location>
</feature>
<feature type="helix" evidence="18">
    <location>
        <begin position="150"/>
        <end position="157"/>
    </location>
</feature>
<feature type="helix" evidence="18">
    <location>
        <begin position="165"/>
        <end position="175"/>
    </location>
</feature>
<feature type="helix" evidence="18">
    <location>
        <begin position="176"/>
        <end position="179"/>
    </location>
</feature>
<feature type="helix" evidence="18">
    <location>
        <begin position="181"/>
        <end position="188"/>
    </location>
</feature>
<feature type="helix" evidence="18">
    <location>
        <begin position="192"/>
        <end position="194"/>
    </location>
</feature>
<feature type="helix" evidence="18">
    <location>
        <begin position="196"/>
        <end position="218"/>
    </location>
</feature>
<feature type="helix" evidence="18">
    <location>
        <begin position="220"/>
        <end position="222"/>
    </location>
</feature>
<feature type="helix" evidence="18">
    <location>
        <begin position="223"/>
        <end position="228"/>
    </location>
</feature>
<feature type="helix" evidence="18">
    <location>
        <begin position="237"/>
        <end position="244"/>
    </location>
</feature>
<feature type="helix" evidence="18">
    <location>
        <begin position="250"/>
        <end position="252"/>
    </location>
</feature>
<feature type="helix" evidence="18">
    <location>
        <begin position="253"/>
        <end position="265"/>
    </location>
</feature>
<feature type="helix" evidence="18">
    <location>
        <begin position="274"/>
        <end position="284"/>
    </location>
</feature>
<feature type="helix" evidence="18">
    <location>
        <begin position="289"/>
        <end position="300"/>
    </location>
</feature>
<feature type="turn" evidence="18">
    <location>
        <begin position="303"/>
        <end position="307"/>
    </location>
</feature>
<feature type="helix" evidence="18">
    <location>
        <begin position="308"/>
        <end position="323"/>
    </location>
</feature>
<feature type="helix" evidence="18">
    <location>
        <begin position="329"/>
        <end position="341"/>
    </location>
</feature>
<feature type="helix" evidence="18">
    <location>
        <begin position="359"/>
        <end position="369"/>
    </location>
</feature>
<feature type="helix" evidence="18">
    <location>
        <begin position="372"/>
        <end position="375"/>
    </location>
</feature>
<feature type="helix" evidence="18">
    <location>
        <begin position="378"/>
        <end position="397"/>
    </location>
</feature>
<feature type="strand" evidence="18">
    <location>
        <begin position="400"/>
        <end position="402"/>
    </location>
</feature>
<feature type="helix" evidence="18">
    <location>
        <begin position="408"/>
        <end position="417"/>
    </location>
</feature>
<feature type="helix" evidence="19">
    <location>
        <begin position="423"/>
        <end position="425"/>
    </location>
</feature>
<feature type="helix" evidence="18">
    <location>
        <begin position="426"/>
        <end position="433"/>
    </location>
</feature>
<feature type="helix" evidence="18">
    <location>
        <begin position="436"/>
        <end position="448"/>
    </location>
</feature>
<feature type="strand" evidence="18">
    <location>
        <begin position="456"/>
        <end position="458"/>
    </location>
</feature>
<feature type="helix" evidence="18">
    <location>
        <begin position="460"/>
        <end position="464"/>
    </location>
</feature>
<sequence>MAMTMRSTRHASKLAQTARLALTNSRRYSTAEPDLKTALKAVIPAKRELFKQVKERSDEVIGEVKVANVIGGMRGLKSMLWEGSVLDPEEGIRFHGKTIKDCQKELPKGTSGTEMLPEAMFWLLLTGQVPSTNQVRAFSRELAEQSHLPQHILDLIKSFPRSMHPMTQLSIAVAALNTESKFAKAYEKGLSKADYWEPTFDDSISLLAKIPRVAALVFRPDEVDQVGTQALDASQDWSYNFAELLGKGGKENQDFHDLLRLYLALHGDHEGGNVSAHATHLVGSALSDPFLSYSAGLLGLAGPLHGLAAQEVLRWILAMQDKIGTKFTDDDVRNYLWDTLKSGRVVPGYGHGVLRKPDPRFQALMDFAATRPDVLANPVFQLVKKNSEIAPAVLTEHGKTKNPHPNVDAASGVLFYHYGFQQPLYYTVTFGVSRALGPLVQLIWDRALGLPIERPKSINLLGLKK</sequence>
<reference key="1">
    <citation type="journal article" date="2008" name="PLoS Genet.">
        <title>Genomic islands in the pathogenic filamentous fungus Aspergillus fumigatus.</title>
        <authorList>
            <person name="Fedorova N.D."/>
            <person name="Khaldi N."/>
            <person name="Joardar V.S."/>
            <person name="Maiti R."/>
            <person name="Amedeo P."/>
            <person name="Anderson M.J."/>
            <person name="Crabtree J."/>
            <person name="Silva J.C."/>
            <person name="Badger J.H."/>
            <person name="Albarraq A."/>
            <person name="Angiuoli S."/>
            <person name="Bussey H."/>
            <person name="Bowyer P."/>
            <person name="Cotty P.J."/>
            <person name="Dyer P.S."/>
            <person name="Egan A."/>
            <person name="Galens K."/>
            <person name="Fraser-Liggett C.M."/>
            <person name="Haas B.J."/>
            <person name="Inman J.M."/>
            <person name="Kent R."/>
            <person name="Lemieux S."/>
            <person name="Malavazi I."/>
            <person name="Orvis J."/>
            <person name="Roemer T."/>
            <person name="Ronning C.M."/>
            <person name="Sundaram J.P."/>
            <person name="Sutton G."/>
            <person name="Turner G."/>
            <person name="Venter J.C."/>
            <person name="White O.R."/>
            <person name="Whitty B.R."/>
            <person name="Youngman P."/>
            <person name="Wolfe K.H."/>
            <person name="Goldman G.H."/>
            <person name="Wortman J.R."/>
            <person name="Jiang B."/>
            <person name="Denning D.W."/>
            <person name="Nierman W.C."/>
        </authorList>
    </citation>
    <scope>NUCLEOTIDE SEQUENCE [LARGE SCALE GENOMIC DNA]</scope>
    <source>
        <strain>CBS 144.89 / FGSC A1163 / CEA10</strain>
    </source>
</reference>
<reference key="2">
    <citation type="journal article" date="2008" name="Cell. Microbiol.">
        <title>Methylcitrate synthase from Aspergillus fumigatus is essential for manifestation of invasive aspergillosis.</title>
        <authorList>
            <person name="Ibrahim-Granet O."/>
            <person name="Dubourdeau M."/>
            <person name="Latge J.P."/>
            <person name="Ave P."/>
            <person name="Huerre M."/>
            <person name="Brakhage A.A."/>
            <person name="Brock M."/>
        </authorList>
    </citation>
    <scope>FUNCTION</scope>
    <scope>CATALYTIC ACTIVITY</scope>
    <scope>DISRUPTION PHENOTYPE</scope>
    <scope>INDUCTION</scope>
    <source>
        <strain>CBS 144.89 / FGSC A1163 / CEA10</strain>
    </source>
</reference>
<reference key="3">
    <citation type="journal article" date="2010" name="Infect. Immun.">
        <title>Embryonated eggs as an alternative infection model to investigate Aspergillus fumigatus virulence.</title>
        <authorList>
            <person name="Jacobsen I.D."/>
            <person name="Grosse K."/>
            <person name="Slesiona S."/>
            <person name="Hube B."/>
            <person name="Berndt A."/>
            <person name="Brock M."/>
        </authorList>
    </citation>
    <scope>DISRUPTION PHENOTYPE</scope>
</reference>
<reference evidence="9 10 11 12 13 14 15 16 17" key="4">
    <citation type="journal article" date="2019" name="Biol. Chem.">
        <title>Comparative studies of Aspergillus fumigatus 2-methylcitrate synthase and human citrate synthase.</title>
        <authorList>
            <person name="Schlachter C.R."/>
            <person name="Klapper V."/>
            <person name="Radford T."/>
            <person name="Chruszcz M."/>
        </authorList>
    </citation>
    <scope>X-RAY CRYSTALLOGRAPHY (1.70 ANGSTROMS) OF 29-465 IN COMPLEX WITH COA AND OXALOACETATE</scope>
    <scope>CATALYTIC ACTIVITY</scope>
    <scope>BIOPHYSICOCHEMICAL PROPERTIES</scope>
    <scope>SUBUNIT</scope>
    <scope>MUTAGENESIS OF TRP-81; GLY-352 AND GLY-419</scope>
</reference>
<comment type="function">
    <text evidence="4">Component of the methylcitrate cycle that catalyzes the synthesis of (2S,3S)-2-methylcitrate from propionyl-CoA and oxaloacetate. Plays an important role in detoxification of propionyl-CoA, an inhibitor of both primary and secondary metabolism. Also has citrate synthase activity using as substrates acetyl-CoA and oxaloacetate. Plays a key role in the estabishment of invasive pulmonary aspergillosis.</text>
</comment>
<comment type="catalytic activity">
    <reaction evidence="4">
        <text>propanoyl-CoA + oxaloacetate + H2O = (2S,3S)-2-methylcitrate + CoA + H(+)</text>
        <dbReference type="Rhea" id="RHEA:23780"/>
        <dbReference type="ChEBI" id="CHEBI:15377"/>
        <dbReference type="ChEBI" id="CHEBI:15378"/>
        <dbReference type="ChEBI" id="CHEBI:16452"/>
        <dbReference type="ChEBI" id="CHEBI:57287"/>
        <dbReference type="ChEBI" id="CHEBI:57392"/>
        <dbReference type="ChEBI" id="CHEBI:58853"/>
        <dbReference type="EC" id="2.3.3.5"/>
    </reaction>
</comment>
<comment type="catalytic activity">
    <reaction evidence="4 6">
        <text>oxaloacetate + acetyl-CoA + H2O = citrate + CoA + H(+)</text>
        <dbReference type="Rhea" id="RHEA:16845"/>
        <dbReference type="ChEBI" id="CHEBI:15377"/>
        <dbReference type="ChEBI" id="CHEBI:15378"/>
        <dbReference type="ChEBI" id="CHEBI:16452"/>
        <dbReference type="ChEBI" id="CHEBI:16947"/>
        <dbReference type="ChEBI" id="CHEBI:57287"/>
        <dbReference type="ChEBI" id="CHEBI:57288"/>
        <dbReference type="EC" id="2.3.3.16"/>
    </reaction>
</comment>
<comment type="biophysicochemical properties">
    <kinetics>
        <KM evidence="6">4.7 uM for propionyl-CoA</KM>
        <KM evidence="6">5 uM for acetyl-CoA</KM>
        <KM evidence="6">4.9 uM for oxaloacetate</KM>
    </kinetics>
</comment>
<comment type="pathway">
    <text evidence="8">Organic acid metabolism; propanoate degradation.</text>
</comment>
<comment type="subunit">
    <text evidence="6">Homodimer.</text>
</comment>
<comment type="subcellular location">
    <subcellularLocation>
        <location evidence="8">Mitochondrion matrix</location>
    </subcellularLocation>
</comment>
<comment type="induction">
    <text evidence="4">Expression is induced by peptone and during infection.</text>
</comment>
<comment type="disruption phenotype">
    <text evidence="4 5">Leads to attenuated virulence in a mouse model for pulmonary infection and an infection model based on embryonated eggs.</text>
</comment>
<comment type="similarity">
    <text evidence="8">Belongs to the citrate synthase family.</text>
</comment>
<organism>
    <name type="scientific">Aspergillus fumigatus (strain CBS 144.89 / FGSC A1163 / CEA10)</name>
    <name type="common">Neosartorya fumigata</name>
    <dbReference type="NCBI Taxonomy" id="451804"/>
    <lineage>
        <taxon>Eukaryota</taxon>
        <taxon>Fungi</taxon>
        <taxon>Dikarya</taxon>
        <taxon>Ascomycota</taxon>
        <taxon>Pezizomycotina</taxon>
        <taxon>Eurotiomycetes</taxon>
        <taxon>Eurotiomycetidae</taxon>
        <taxon>Eurotiales</taxon>
        <taxon>Aspergillaceae</taxon>
        <taxon>Aspergillus</taxon>
        <taxon>Aspergillus subgen. Fumigati</taxon>
    </lineage>
</organism>
<gene>
    <name evidence="7" type="primary">mcsA</name>
    <name type="ORF">AFUB_094700</name>
</gene>